<name>ATN5_YEAST</name>
<dbReference type="EC" id="7.2.2.3" evidence="2"/>
<dbReference type="EMBL" id="Z68196">
    <property type="protein sequence ID" value="CAA92377.1"/>
    <property type="molecule type" value="Genomic_DNA"/>
</dbReference>
<dbReference type="EMBL" id="Z74334">
    <property type="protein sequence ID" value="CAA98864.1"/>
    <property type="molecule type" value="Genomic_DNA"/>
</dbReference>
<dbReference type="EMBL" id="Z74335">
    <property type="protein sequence ID" value="CAA98865.1"/>
    <property type="molecule type" value="Genomic_DNA"/>
</dbReference>
<dbReference type="EMBL" id="BK006938">
    <property type="protein sequence ID" value="DAA11886.1"/>
    <property type="molecule type" value="Genomic_DNA"/>
</dbReference>
<dbReference type="PIR" id="S67852">
    <property type="entry name" value="S67852"/>
</dbReference>
<dbReference type="RefSeq" id="NP_010323.3">
    <property type="nucleotide sequence ID" value="NM_001180346.3"/>
</dbReference>
<dbReference type="SMR" id="Q12691"/>
<dbReference type="BioGRID" id="32093">
    <property type="interactions" value="37"/>
</dbReference>
<dbReference type="DIP" id="DIP-5253N"/>
<dbReference type="FunCoup" id="Q12691">
    <property type="interactions" value="58"/>
</dbReference>
<dbReference type="IntAct" id="Q12691">
    <property type="interactions" value="3"/>
</dbReference>
<dbReference type="MINT" id="Q12691"/>
<dbReference type="STRING" id="4932.YDR038C"/>
<dbReference type="iPTMnet" id="Q12691"/>
<dbReference type="PaxDb" id="4932-YDR038C"/>
<dbReference type="PeptideAtlas" id="Q12691"/>
<dbReference type="EnsemblFungi" id="YDR038C_mRNA">
    <property type="protein sequence ID" value="YDR038C"/>
    <property type="gene ID" value="YDR038C"/>
</dbReference>
<dbReference type="GeneID" id="851608"/>
<dbReference type="KEGG" id="sce:YDR038C"/>
<dbReference type="AGR" id="SGD:S000002445"/>
<dbReference type="SGD" id="S000002445">
    <property type="gene designation" value="ENA5"/>
</dbReference>
<dbReference type="VEuPathDB" id="FungiDB:YDR038C"/>
<dbReference type="eggNOG" id="KOG0202">
    <property type="taxonomic scope" value="Eukaryota"/>
</dbReference>
<dbReference type="GeneTree" id="ENSGT00940000176395"/>
<dbReference type="HOGENOM" id="CLU_002360_4_1_1"/>
<dbReference type="InParanoid" id="Q12691"/>
<dbReference type="OMA" id="ASRFNWG"/>
<dbReference type="OrthoDB" id="3352408at2759"/>
<dbReference type="BioCyc" id="YEAST:G3O-29652-MONOMER"/>
<dbReference type="BioGRID-ORCS" id="851608">
    <property type="hits" value="1 hit in 10 CRISPR screens"/>
</dbReference>
<dbReference type="PRO" id="PR:Q12691"/>
<dbReference type="Proteomes" id="UP000002311">
    <property type="component" value="Chromosome IV"/>
</dbReference>
<dbReference type="RNAct" id="Q12691">
    <property type="molecule type" value="protein"/>
</dbReference>
<dbReference type="GO" id="GO:0071944">
    <property type="term" value="C:cell periphery"/>
    <property type="evidence" value="ECO:0007005"/>
    <property type="project" value="SGD"/>
</dbReference>
<dbReference type="GO" id="GO:0005886">
    <property type="term" value="C:plasma membrane"/>
    <property type="evidence" value="ECO:0007005"/>
    <property type="project" value="SGD"/>
</dbReference>
<dbReference type="GO" id="GO:0005524">
    <property type="term" value="F:ATP binding"/>
    <property type="evidence" value="ECO:0007669"/>
    <property type="project" value="UniProtKB-KW"/>
</dbReference>
<dbReference type="GO" id="GO:0016887">
    <property type="term" value="F:ATP hydrolysis activity"/>
    <property type="evidence" value="ECO:0007669"/>
    <property type="project" value="InterPro"/>
</dbReference>
<dbReference type="GO" id="GO:0046872">
    <property type="term" value="F:metal ion binding"/>
    <property type="evidence" value="ECO:0007669"/>
    <property type="project" value="UniProtKB-KW"/>
</dbReference>
<dbReference type="GO" id="GO:0008556">
    <property type="term" value="F:P-type potassium transmembrane transporter activity"/>
    <property type="evidence" value="ECO:0000318"/>
    <property type="project" value="GO_Central"/>
</dbReference>
<dbReference type="GO" id="GO:0008554">
    <property type="term" value="F:P-type sodium transporter activity"/>
    <property type="evidence" value="ECO:0000250"/>
    <property type="project" value="SGD"/>
</dbReference>
<dbReference type="GO" id="GO:0006874">
    <property type="term" value="P:intracellular calcium ion homeostasis"/>
    <property type="evidence" value="ECO:0000318"/>
    <property type="project" value="GO_Central"/>
</dbReference>
<dbReference type="GO" id="GO:0034220">
    <property type="term" value="P:monoatomic ion transmembrane transport"/>
    <property type="evidence" value="ECO:0000318"/>
    <property type="project" value="GO_Central"/>
</dbReference>
<dbReference type="GO" id="GO:0006813">
    <property type="term" value="P:potassium ion transport"/>
    <property type="evidence" value="ECO:0000318"/>
    <property type="project" value="GO_Central"/>
</dbReference>
<dbReference type="GO" id="GO:0006814">
    <property type="term" value="P:sodium ion transport"/>
    <property type="evidence" value="ECO:0000250"/>
    <property type="project" value="SGD"/>
</dbReference>
<dbReference type="GO" id="GO:0055085">
    <property type="term" value="P:transmembrane transport"/>
    <property type="evidence" value="ECO:0000250"/>
    <property type="project" value="SGD"/>
</dbReference>
<dbReference type="CDD" id="cd02086">
    <property type="entry name" value="P-type_ATPase_Na_ENA"/>
    <property type="match status" value="1"/>
</dbReference>
<dbReference type="FunFam" id="2.70.150.10:FF:000016">
    <property type="entry name" value="Calcium-transporting P-type ATPase putative"/>
    <property type="match status" value="1"/>
</dbReference>
<dbReference type="FunFam" id="1.20.1110.10:FF:000040">
    <property type="entry name" value="Na(+)-exporting P-type ATPase"/>
    <property type="match status" value="1"/>
</dbReference>
<dbReference type="FunFam" id="1.20.1110.10:FF:000015">
    <property type="entry name" value="Sodium ion P-type ATPase"/>
    <property type="match status" value="1"/>
</dbReference>
<dbReference type="FunFam" id="3.40.1110.10:FF:000039">
    <property type="entry name" value="Sodium P-type ATPase"/>
    <property type="match status" value="1"/>
</dbReference>
<dbReference type="FunFam" id="3.40.50.1000:FF:000047">
    <property type="entry name" value="Sodium P-type ATPase"/>
    <property type="match status" value="1"/>
</dbReference>
<dbReference type="Gene3D" id="3.40.1110.10">
    <property type="entry name" value="Calcium-transporting ATPase, cytoplasmic domain N"/>
    <property type="match status" value="1"/>
</dbReference>
<dbReference type="Gene3D" id="2.70.150.10">
    <property type="entry name" value="Calcium-transporting ATPase, cytoplasmic transduction domain A"/>
    <property type="match status" value="1"/>
</dbReference>
<dbReference type="Gene3D" id="1.20.1110.10">
    <property type="entry name" value="Calcium-transporting ATPase, transmembrane domain"/>
    <property type="match status" value="2"/>
</dbReference>
<dbReference type="Gene3D" id="3.40.50.1000">
    <property type="entry name" value="HAD superfamily/HAD-like"/>
    <property type="match status" value="1"/>
</dbReference>
<dbReference type="InterPro" id="IPR006068">
    <property type="entry name" value="ATPase_P-typ_cation-transptr_C"/>
</dbReference>
<dbReference type="InterPro" id="IPR004014">
    <property type="entry name" value="ATPase_P-typ_cation-transptr_N"/>
</dbReference>
<dbReference type="InterPro" id="IPR023299">
    <property type="entry name" value="ATPase_P-typ_cyto_dom_N"/>
</dbReference>
<dbReference type="InterPro" id="IPR018303">
    <property type="entry name" value="ATPase_P-typ_P_site"/>
</dbReference>
<dbReference type="InterPro" id="IPR023298">
    <property type="entry name" value="ATPase_P-typ_TM_dom_sf"/>
</dbReference>
<dbReference type="InterPro" id="IPR008250">
    <property type="entry name" value="ATPase_P-typ_transduc_dom_A_sf"/>
</dbReference>
<dbReference type="InterPro" id="IPR036412">
    <property type="entry name" value="HAD-like_sf"/>
</dbReference>
<dbReference type="InterPro" id="IPR023214">
    <property type="entry name" value="HAD_sf"/>
</dbReference>
<dbReference type="InterPro" id="IPR006414">
    <property type="entry name" value="P-type_ATPase_IID"/>
</dbReference>
<dbReference type="InterPro" id="IPR001757">
    <property type="entry name" value="P_typ_ATPase"/>
</dbReference>
<dbReference type="InterPro" id="IPR044492">
    <property type="entry name" value="P_typ_ATPase_HD_dom"/>
</dbReference>
<dbReference type="NCBIfam" id="TIGR01523">
    <property type="entry name" value="ATPase-IID_K-Na"/>
    <property type="match status" value="1"/>
</dbReference>
<dbReference type="NCBIfam" id="TIGR01494">
    <property type="entry name" value="ATPase_P-type"/>
    <property type="match status" value="3"/>
</dbReference>
<dbReference type="PANTHER" id="PTHR42861">
    <property type="entry name" value="CALCIUM-TRANSPORTING ATPASE"/>
    <property type="match status" value="1"/>
</dbReference>
<dbReference type="Pfam" id="PF13246">
    <property type="entry name" value="Cation_ATPase"/>
    <property type="match status" value="1"/>
</dbReference>
<dbReference type="Pfam" id="PF00689">
    <property type="entry name" value="Cation_ATPase_C"/>
    <property type="match status" value="1"/>
</dbReference>
<dbReference type="Pfam" id="PF00690">
    <property type="entry name" value="Cation_ATPase_N"/>
    <property type="match status" value="1"/>
</dbReference>
<dbReference type="Pfam" id="PF00122">
    <property type="entry name" value="E1-E2_ATPase"/>
    <property type="match status" value="1"/>
</dbReference>
<dbReference type="Pfam" id="PF00702">
    <property type="entry name" value="Hydrolase"/>
    <property type="match status" value="1"/>
</dbReference>
<dbReference type="PRINTS" id="PR00119">
    <property type="entry name" value="CATATPASE"/>
</dbReference>
<dbReference type="SFLD" id="SFLDS00003">
    <property type="entry name" value="Haloacid_Dehalogenase"/>
    <property type="match status" value="1"/>
</dbReference>
<dbReference type="SFLD" id="SFLDF00027">
    <property type="entry name" value="p-type_atpase"/>
    <property type="match status" value="1"/>
</dbReference>
<dbReference type="SMART" id="SM00831">
    <property type="entry name" value="Cation_ATPase_N"/>
    <property type="match status" value="1"/>
</dbReference>
<dbReference type="SUPFAM" id="SSF81653">
    <property type="entry name" value="Calcium ATPase, transduction domain A"/>
    <property type="match status" value="1"/>
</dbReference>
<dbReference type="SUPFAM" id="SSF81665">
    <property type="entry name" value="Calcium ATPase, transmembrane domain M"/>
    <property type="match status" value="1"/>
</dbReference>
<dbReference type="SUPFAM" id="SSF56784">
    <property type="entry name" value="HAD-like"/>
    <property type="match status" value="1"/>
</dbReference>
<dbReference type="SUPFAM" id="SSF81660">
    <property type="entry name" value="Metal cation-transporting ATPase, ATP-binding domain N"/>
    <property type="match status" value="1"/>
</dbReference>
<dbReference type="PROSITE" id="PS00154">
    <property type="entry name" value="ATPASE_E1_E2"/>
    <property type="match status" value="1"/>
</dbReference>
<evidence type="ECO:0000250" key="1">
    <source>
        <dbReference type="UniProtKB" id="P04191"/>
    </source>
</evidence>
<evidence type="ECO:0000250" key="2">
    <source>
        <dbReference type="UniProtKB" id="P13587"/>
    </source>
</evidence>
<evidence type="ECO:0000255" key="3"/>
<evidence type="ECO:0000256" key="4">
    <source>
        <dbReference type="SAM" id="MobiDB-lite"/>
    </source>
</evidence>
<evidence type="ECO:0000269" key="5">
    <source>
    </source>
</evidence>
<evidence type="ECO:0000269" key="6">
    <source>
    </source>
</evidence>
<evidence type="ECO:0000269" key="7">
    <source>
    </source>
</evidence>
<evidence type="ECO:0000305" key="8"/>
<evidence type="ECO:0000305" key="9">
    <source>
    </source>
</evidence>
<evidence type="ECO:0000312" key="10">
    <source>
        <dbReference type="SGD" id="S000002445"/>
    </source>
</evidence>
<feature type="chain" id="PRO_0000046244" description="Sodium/potassium exporting P-type ATPase 5">
    <location>
        <begin position="1"/>
        <end position="1091"/>
    </location>
</feature>
<feature type="topological domain" description="Cytoplasmic" evidence="3">
    <location>
        <begin position="1"/>
        <end position="63"/>
    </location>
</feature>
<feature type="transmembrane region" description="Helical" evidence="3">
    <location>
        <begin position="64"/>
        <end position="84"/>
    </location>
</feature>
<feature type="topological domain" description="Extracellular" evidence="3">
    <location>
        <begin position="85"/>
        <end position="90"/>
    </location>
</feature>
<feature type="transmembrane region" description="Helical" evidence="3">
    <location>
        <begin position="91"/>
        <end position="111"/>
    </location>
</feature>
<feature type="topological domain" description="Cytoplasmic" evidence="3">
    <location>
        <begin position="112"/>
        <end position="282"/>
    </location>
</feature>
<feature type="transmembrane region" description="Helical" evidence="3">
    <location>
        <begin position="283"/>
        <end position="303"/>
    </location>
</feature>
<feature type="topological domain" description="Extracellular" evidence="3">
    <location>
        <begin position="304"/>
        <end position="312"/>
    </location>
</feature>
<feature type="transmembrane region" description="Helical" evidence="3">
    <location>
        <begin position="313"/>
        <end position="333"/>
    </location>
</feature>
<feature type="topological domain" description="Cytoplasmic" evidence="3">
    <location>
        <begin position="334"/>
        <end position="815"/>
    </location>
</feature>
<feature type="transmembrane region" description="Helical" evidence="3">
    <location>
        <begin position="816"/>
        <end position="836"/>
    </location>
</feature>
<feature type="topological domain" description="Extracellular" evidence="3">
    <location>
        <begin position="837"/>
        <end position="848"/>
    </location>
</feature>
<feature type="transmembrane region" description="Helical" evidence="3">
    <location>
        <begin position="849"/>
        <end position="869"/>
    </location>
</feature>
<feature type="topological domain" description="Cytoplasmic" evidence="3">
    <location>
        <begin position="870"/>
        <end position="885"/>
    </location>
</feature>
<feature type="transmembrane region" description="Helical" evidence="3">
    <location>
        <begin position="886"/>
        <end position="906"/>
    </location>
</feature>
<feature type="topological domain" description="Extracellular" evidence="3">
    <location>
        <begin position="907"/>
        <end position="943"/>
    </location>
</feature>
<feature type="transmembrane region" description="Helical" evidence="3">
    <location>
        <begin position="944"/>
        <end position="964"/>
    </location>
</feature>
<feature type="topological domain" description="Cytoplasmic" evidence="3">
    <location>
        <begin position="965"/>
        <end position="991"/>
    </location>
</feature>
<feature type="transmembrane region" description="Helical" evidence="3">
    <location>
        <begin position="992"/>
        <end position="1012"/>
    </location>
</feature>
<feature type="topological domain" description="Extracellular" evidence="3">
    <location>
        <begin position="1013"/>
        <end position="1021"/>
    </location>
</feature>
<feature type="transmembrane region" description="Helical" evidence="3">
    <location>
        <begin position="1022"/>
        <end position="1042"/>
    </location>
</feature>
<feature type="topological domain" description="Cytoplasmic" evidence="3">
    <location>
        <begin position="1043"/>
        <end position="1091"/>
    </location>
</feature>
<feature type="region of interest" description="Disordered" evidence="4">
    <location>
        <begin position="499"/>
        <end position="525"/>
    </location>
</feature>
<feature type="compositionally biased region" description="Polar residues" evidence="4">
    <location>
        <begin position="503"/>
        <end position="519"/>
    </location>
</feature>
<feature type="active site" description="4-aspartylphosphate intermediate" evidence="1">
    <location>
        <position position="369"/>
    </location>
</feature>
<feature type="binding site" evidence="1">
    <location>
        <position position="369"/>
    </location>
    <ligand>
        <name>Mg(2+)</name>
        <dbReference type="ChEBI" id="CHEBI:18420"/>
    </ligand>
</feature>
<feature type="binding site" evidence="1">
    <location>
        <position position="371"/>
    </location>
    <ligand>
        <name>ATP</name>
        <dbReference type="ChEBI" id="CHEBI:30616"/>
    </ligand>
</feature>
<feature type="binding site" evidence="1">
    <location>
        <position position="371"/>
    </location>
    <ligand>
        <name>Mg(2+)</name>
        <dbReference type="ChEBI" id="CHEBI:18420"/>
    </ligand>
</feature>
<feature type="binding site" evidence="1">
    <location>
        <position position="483"/>
    </location>
    <ligand>
        <name>ATP</name>
        <dbReference type="ChEBI" id="CHEBI:30616"/>
    </ligand>
</feature>
<feature type="binding site" evidence="1">
    <location>
        <position position="561"/>
    </location>
    <ligand>
        <name>ATP</name>
        <dbReference type="ChEBI" id="CHEBI:30616"/>
    </ligand>
</feature>
<feature type="binding site" evidence="1">
    <location>
        <position position="606"/>
    </location>
    <ligand>
        <name>ATP</name>
        <dbReference type="ChEBI" id="CHEBI:30616"/>
    </ligand>
</feature>
<feature type="binding site" evidence="1">
    <location>
        <position position="673"/>
    </location>
    <ligand>
        <name>ATP</name>
        <dbReference type="ChEBI" id="CHEBI:30616"/>
    </ligand>
</feature>
<feature type="binding site" evidence="1">
    <location>
        <position position="674"/>
    </location>
    <ligand>
        <name>ATP</name>
        <dbReference type="ChEBI" id="CHEBI:30616"/>
    </ligand>
</feature>
<feature type="binding site" evidence="1">
    <location>
        <position position="675"/>
    </location>
    <ligand>
        <name>ATP</name>
        <dbReference type="ChEBI" id="CHEBI:30616"/>
    </ligand>
</feature>
<feature type="binding site" evidence="1">
    <location>
        <position position="732"/>
    </location>
    <ligand>
        <name>ATP</name>
        <dbReference type="ChEBI" id="CHEBI:30616"/>
    </ligand>
</feature>
<feature type="binding site" evidence="1">
    <location>
        <position position="738"/>
    </location>
    <ligand>
        <name>ATP</name>
        <dbReference type="ChEBI" id="CHEBI:30616"/>
    </ligand>
</feature>
<feature type="binding site" evidence="1">
    <location>
        <position position="757"/>
    </location>
    <ligand>
        <name>Mg(2+)</name>
        <dbReference type="ChEBI" id="CHEBI:18420"/>
    </ligand>
</feature>
<feature type="binding site" evidence="1">
    <location>
        <position position="760"/>
    </location>
    <ligand>
        <name>ATP</name>
        <dbReference type="ChEBI" id="CHEBI:30616"/>
    </ligand>
</feature>
<protein>
    <recommendedName>
        <fullName evidence="8">Sodium/potassium exporting P-type ATPase 5</fullName>
        <ecNumber evidence="2">7.2.2.3</ecNumber>
    </recommendedName>
</protein>
<keyword id="KW-0067">ATP-binding</keyword>
<keyword id="KW-1003">Cell membrane</keyword>
<keyword id="KW-0406">Ion transport</keyword>
<keyword id="KW-0460">Magnesium</keyword>
<keyword id="KW-0472">Membrane</keyword>
<keyword id="KW-0479">Metal-binding</keyword>
<keyword id="KW-0547">Nucleotide-binding</keyword>
<keyword id="KW-0630">Potassium</keyword>
<keyword id="KW-0633">Potassium transport</keyword>
<keyword id="KW-1185">Reference proteome</keyword>
<keyword id="KW-0915">Sodium</keyword>
<keyword id="KW-0739">Sodium transport</keyword>
<keyword id="KW-1278">Translocase</keyword>
<keyword id="KW-0812">Transmembrane</keyword>
<keyword id="KW-1133">Transmembrane helix</keyword>
<keyword id="KW-0813">Transport</keyword>
<proteinExistence type="evidence at protein level"/>
<sequence>MSEGTVKENNNEEFNAYHTLTTEEAAEFIGTSLTEGLTQDESLRRLKAVGENTLGDDTKIDYKAMVLHQVCNAMIMVLVISMAISFAVRDWITGGVISFVIAVNVLIGLVQEYKATKTMNSLKNLSSPNAHVIRNGKSETINSKDVVPGDICLVKVGDTIPADLRLIETKNFDTDESLLTGESLPVSKDANLVFGKEEETSVGDRLNLAFSSSAVVKGRAKGIVIKTALNSEIGKIAKSLQGDSGLISRDPSKSWLQNTWISTKKVTGAFLGTNVGTPLHRKLSKLAVLLFWIAVLFAIIVMASQKFDVDKRVAIYAICVALSMIPSSLVVVLTITMSVGAAVMVSRNVIVRKLDSLEALGAVNDICSDKTGTLTQGKMLARQIWIPRFGTITISNSDDPFNPNEGNVSLIPRFSPYEYSHNEDGDVGILQNFKDRLYEKDLPEDIDMDLFQKWLETATLANIATVFKDDATDCWKAHGDPTEIAIQVFATKMDLPHNALTGEKSTNQSNENDQSSLSQHNEKPGSAQFEHIAEFPFDSTVKRMSSVYYNNHNETYNIYGKGAFESIISCCSSWYGKDGVKITPLTDCDVETIRKNVYSLSNEGLRVLGFASKSFTKDQVNDDQLKNITSNRATAESDLVFLGLIGIYDPPRNETAGAVKKFHQAGINVHMLTGDFVGTAKAIAQEVGILPTNLYHYSQEIVDSMVMTGSQFDGLSEEEVDDLPVLPLVIARCSPQTKVRMIEALHRRKKFCAMTGDGVNDSPSLKMANVGIAMGINGSDVSKEASDIVLSDDNFASILNAVEEGRRMTDNIQKFVLQLLAENVAQALYLIIGLVFRDENGKSVFPLSPVEVLWIIVVTSCFPAMGLGLEKAAPDLMDRPPNDSEVGIFTWEVIIDTFAYGIIMTGSCMASFTGSLYGINSGRLGHDCDGTYNSSCRDVYRSRSAAFATMTWCALILAWEVVDMRRSFFRMHPDTDSPVKEFFRSIWGNQFLFWSIIFGFVSAFPVVYIPVINDKVFLHKPIGAEWGLAIAFTIAFWIGAELYKCGKRRYFKTQRAHNSENDLERSSKHDPFEAYSTSTTLQSEINISVKH</sequence>
<gene>
    <name evidence="10" type="primary">ENA5</name>
    <name evidence="10" type="ordered locus">YDR038C</name>
    <name type="ORF">YD9673.10c</name>
</gene>
<reference key="1">
    <citation type="journal article" date="1997" name="Nature">
        <title>The nucleotide sequence of Saccharomyces cerevisiae chromosome IV.</title>
        <authorList>
            <person name="Jacq C."/>
            <person name="Alt-Moerbe J."/>
            <person name="Andre B."/>
            <person name="Arnold W."/>
            <person name="Bahr A."/>
            <person name="Ballesta J.P.G."/>
            <person name="Bargues M."/>
            <person name="Baron L."/>
            <person name="Becker A."/>
            <person name="Biteau N."/>
            <person name="Bloecker H."/>
            <person name="Blugeon C."/>
            <person name="Boskovic J."/>
            <person name="Brandt P."/>
            <person name="Brueckner M."/>
            <person name="Buitrago M.J."/>
            <person name="Coster F."/>
            <person name="Delaveau T."/>
            <person name="del Rey F."/>
            <person name="Dujon B."/>
            <person name="Eide L.G."/>
            <person name="Garcia-Cantalejo J.M."/>
            <person name="Goffeau A."/>
            <person name="Gomez-Peris A."/>
            <person name="Granotier C."/>
            <person name="Hanemann V."/>
            <person name="Hankeln T."/>
            <person name="Hoheisel J.D."/>
            <person name="Jaeger W."/>
            <person name="Jimenez A."/>
            <person name="Jonniaux J.-L."/>
            <person name="Kraemer C."/>
            <person name="Kuester H."/>
            <person name="Laamanen P."/>
            <person name="Legros Y."/>
            <person name="Louis E.J."/>
            <person name="Moeller-Rieker S."/>
            <person name="Monnet A."/>
            <person name="Moro M."/>
            <person name="Mueller-Auer S."/>
            <person name="Nussbaumer B."/>
            <person name="Paricio N."/>
            <person name="Paulin L."/>
            <person name="Perea J."/>
            <person name="Perez-Alonso M."/>
            <person name="Perez-Ortin J.E."/>
            <person name="Pohl T.M."/>
            <person name="Prydz H."/>
            <person name="Purnelle B."/>
            <person name="Rasmussen S.W."/>
            <person name="Remacha M.A."/>
            <person name="Revuelta J.L."/>
            <person name="Rieger M."/>
            <person name="Salom D."/>
            <person name="Saluz H.P."/>
            <person name="Saiz J.E."/>
            <person name="Saren A.-M."/>
            <person name="Schaefer M."/>
            <person name="Scharfe M."/>
            <person name="Schmidt E.R."/>
            <person name="Schneider C."/>
            <person name="Scholler P."/>
            <person name="Schwarz S."/>
            <person name="Soler-Mira A."/>
            <person name="Urrestarazu L.A."/>
            <person name="Verhasselt P."/>
            <person name="Vissers S."/>
            <person name="Voet M."/>
            <person name="Volckaert G."/>
            <person name="Wagner G."/>
            <person name="Wambutt R."/>
            <person name="Wedler E."/>
            <person name="Wedler H."/>
            <person name="Woelfl S."/>
            <person name="Harris D.E."/>
            <person name="Bowman S."/>
            <person name="Brown D."/>
            <person name="Churcher C.M."/>
            <person name="Connor R."/>
            <person name="Dedman K."/>
            <person name="Gentles S."/>
            <person name="Hamlin N."/>
            <person name="Hunt S."/>
            <person name="Jones L."/>
            <person name="McDonald S."/>
            <person name="Murphy L.D."/>
            <person name="Niblett D."/>
            <person name="Odell C."/>
            <person name="Oliver K."/>
            <person name="Rajandream M.A."/>
            <person name="Richards C."/>
            <person name="Shore L."/>
            <person name="Walsh S.V."/>
            <person name="Barrell B.G."/>
            <person name="Dietrich F.S."/>
            <person name="Mulligan J.T."/>
            <person name="Allen E."/>
            <person name="Araujo R."/>
            <person name="Aviles E."/>
            <person name="Berno A."/>
            <person name="Carpenter J."/>
            <person name="Chen E."/>
            <person name="Cherry J.M."/>
            <person name="Chung E."/>
            <person name="Duncan M."/>
            <person name="Hunicke-Smith S."/>
            <person name="Hyman R.W."/>
            <person name="Komp C."/>
            <person name="Lashkari D."/>
            <person name="Lew H."/>
            <person name="Lin D."/>
            <person name="Mosedale D."/>
            <person name="Nakahara K."/>
            <person name="Namath A."/>
            <person name="Oefner P."/>
            <person name="Oh C."/>
            <person name="Petel F.X."/>
            <person name="Roberts D."/>
            <person name="Schramm S."/>
            <person name="Schroeder M."/>
            <person name="Shogren T."/>
            <person name="Shroff N."/>
            <person name="Winant A."/>
            <person name="Yelton M.A."/>
            <person name="Botstein D."/>
            <person name="Davis R.W."/>
            <person name="Johnston M."/>
            <person name="Andrews S."/>
            <person name="Brinkman R."/>
            <person name="Cooper J."/>
            <person name="Ding H."/>
            <person name="Du Z."/>
            <person name="Favello A."/>
            <person name="Fulton L."/>
            <person name="Gattung S."/>
            <person name="Greco T."/>
            <person name="Hallsworth K."/>
            <person name="Hawkins J."/>
            <person name="Hillier L.W."/>
            <person name="Jier M."/>
            <person name="Johnson D."/>
            <person name="Johnston L."/>
            <person name="Kirsten J."/>
            <person name="Kucaba T."/>
            <person name="Langston Y."/>
            <person name="Latreille P."/>
            <person name="Le T."/>
            <person name="Mardis E."/>
            <person name="Menezes S."/>
            <person name="Miller N."/>
            <person name="Nhan M."/>
            <person name="Pauley A."/>
            <person name="Peluso D."/>
            <person name="Rifkin L."/>
            <person name="Riles L."/>
            <person name="Taich A."/>
            <person name="Trevaskis E."/>
            <person name="Vignati D."/>
            <person name="Wilcox L."/>
            <person name="Wohldman P."/>
            <person name="Vaudin M."/>
            <person name="Wilson R."/>
            <person name="Waterston R."/>
            <person name="Albermann K."/>
            <person name="Hani J."/>
            <person name="Heumann K."/>
            <person name="Kleine K."/>
            <person name="Mewes H.-W."/>
            <person name="Zollner A."/>
            <person name="Zaccaria P."/>
        </authorList>
    </citation>
    <scope>NUCLEOTIDE SEQUENCE [LARGE SCALE GENOMIC DNA]</scope>
    <source>
        <strain>ATCC 204508 / S288c</strain>
    </source>
</reference>
<reference key="2">
    <citation type="journal article" date="2014" name="G3 (Bethesda)">
        <title>The reference genome sequence of Saccharomyces cerevisiae: Then and now.</title>
        <authorList>
            <person name="Engel S.R."/>
            <person name="Dietrich F.S."/>
            <person name="Fisk D.G."/>
            <person name="Binkley G."/>
            <person name="Balakrishnan R."/>
            <person name="Costanzo M.C."/>
            <person name="Dwight S.S."/>
            <person name="Hitz B.C."/>
            <person name="Karra K."/>
            <person name="Nash R.S."/>
            <person name="Weng S."/>
            <person name="Wong E.D."/>
            <person name="Lloyd P."/>
            <person name="Skrzypek M.S."/>
            <person name="Miyasato S.R."/>
            <person name="Simison M."/>
            <person name="Cherry J.M."/>
        </authorList>
    </citation>
    <scope>GENOME REANNOTATION</scope>
    <source>
        <strain>ATCC 204508 / S288c</strain>
    </source>
</reference>
<reference key="3">
    <citation type="journal article" date="2003" name="Nature">
        <title>Global analysis of protein localization in budding yeast.</title>
        <authorList>
            <person name="Huh W.-K."/>
            <person name="Falvo J.V."/>
            <person name="Gerke L.C."/>
            <person name="Carroll A.S."/>
            <person name="Howson R.W."/>
            <person name="Weissman J.S."/>
            <person name="O'Shea E.K."/>
        </authorList>
    </citation>
    <scope>SUBCELLULAR LOCATION [LARGE SCALE ANALYSIS]</scope>
</reference>
<reference key="4">
    <citation type="journal article" date="2003" name="Nature">
        <title>Global analysis of protein expression in yeast.</title>
        <authorList>
            <person name="Ghaemmaghami S."/>
            <person name="Huh W.-K."/>
            <person name="Bower K."/>
            <person name="Howson R.W."/>
            <person name="Belle A."/>
            <person name="Dephoure N."/>
            <person name="O'Shea E.K."/>
            <person name="Weissman J.S."/>
        </authorList>
    </citation>
    <scope>LEVEL OF PROTEIN EXPRESSION [LARGE SCALE ANALYSIS]</scope>
</reference>
<reference key="5">
    <citation type="journal article" date="2006" name="Proc. Natl. Acad. Sci. U.S.A.">
        <title>A global topology map of the Saccharomyces cerevisiae membrane proteome.</title>
        <authorList>
            <person name="Kim H."/>
            <person name="Melen K."/>
            <person name="Oesterberg M."/>
            <person name="von Heijne G."/>
        </authorList>
    </citation>
    <scope>TOPOLOGY [LARGE SCALE ANALYSIS]</scope>
    <source>
        <strain>ATCC 208353 / W303-1A</strain>
    </source>
</reference>
<reference key="6">
    <citation type="journal article" date="2012" name="FEMS Yeast Res.">
        <title>Plasma-membrane hyperpolarization diminishes the cation efflux via Nha1 antiporter and Ena ATPase under potassium-limiting conditions.</title>
        <authorList>
            <person name="Zahradka J."/>
            <person name="Sychrova H."/>
        </authorList>
    </citation>
    <scope>FUNCTION</scope>
    <scope>CATALYTIC ACTIVITY</scope>
</reference>
<organism>
    <name type="scientific">Saccharomyces cerevisiae (strain ATCC 204508 / S288c)</name>
    <name type="common">Baker's yeast</name>
    <dbReference type="NCBI Taxonomy" id="559292"/>
    <lineage>
        <taxon>Eukaryota</taxon>
        <taxon>Fungi</taxon>
        <taxon>Dikarya</taxon>
        <taxon>Ascomycota</taxon>
        <taxon>Saccharomycotina</taxon>
        <taxon>Saccharomycetes</taxon>
        <taxon>Saccharomycetales</taxon>
        <taxon>Saccharomycetaceae</taxon>
        <taxon>Saccharomyces</taxon>
    </lineage>
</organism>
<comment type="function">
    <text evidence="2 7">Catalyzes the hydrolysis of ATP coupled with the export of sodium and potassium from the cell (By similarity). May export potassium less efficiently (PubMed:22329368). May transport other cations such as lithium (By similarity). Sodium/potassium efflux ATPases are involved in salt tolerance and maintaining the membrane potential across the plasma membrane in high salinity (Na+) or alkaline (K+) environments (By similarity).</text>
</comment>
<comment type="catalytic activity">
    <reaction evidence="2">
        <text>Na(+)(in) + ATP + H2O = Na(+)(out) + ADP + phosphate + H(+)</text>
        <dbReference type="Rhea" id="RHEA:14633"/>
        <dbReference type="ChEBI" id="CHEBI:15377"/>
        <dbReference type="ChEBI" id="CHEBI:15378"/>
        <dbReference type="ChEBI" id="CHEBI:29101"/>
        <dbReference type="ChEBI" id="CHEBI:30616"/>
        <dbReference type="ChEBI" id="CHEBI:43474"/>
        <dbReference type="ChEBI" id="CHEBI:456216"/>
        <dbReference type="EC" id="7.2.2.3"/>
    </reaction>
    <physiologicalReaction direction="left-to-right" evidence="2">
        <dbReference type="Rhea" id="RHEA:14634"/>
    </physiologicalReaction>
</comment>
<comment type="catalytic activity">
    <reaction evidence="9">
        <text>K(+)(in) + ATP + H2O = K(+)(out) + ADP + phosphate + H(+)</text>
        <dbReference type="Rhea" id="RHEA:75815"/>
        <dbReference type="ChEBI" id="CHEBI:15377"/>
        <dbReference type="ChEBI" id="CHEBI:15378"/>
        <dbReference type="ChEBI" id="CHEBI:29103"/>
        <dbReference type="ChEBI" id="CHEBI:30616"/>
        <dbReference type="ChEBI" id="CHEBI:43474"/>
        <dbReference type="ChEBI" id="CHEBI:456216"/>
    </reaction>
</comment>
<comment type="cofactor">
    <cofactor evidence="1">
        <name>Mg(2+)</name>
        <dbReference type="ChEBI" id="CHEBI:18420"/>
    </cofactor>
</comment>
<comment type="subcellular location">
    <subcellularLocation>
        <location evidence="5">Cell membrane</location>
        <topology evidence="5">Multi-pass membrane protein</topology>
    </subcellularLocation>
</comment>
<comment type="PTM">
    <text evidence="2">The active site is phosphorylated in presence of sodium or potassium and in conditions of higher pH. Not phosphorylated in presence of calcium ions.</text>
</comment>
<comment type="miscellaneous">
    <text evidence="6">Present with 606 molecules/cell in log phase SD medium.</text>
</comment>
<comment type="similarity">
    <text evidence="8">Belongs to the cation transport ATPase (P-type) (TC 3.A.3) family. Type IID subfamily.</text>
</comment>
<accession>Q12691</accession>
<accession>D6VS26</accession>
<accession>E9PAF4</accession>
<accession>P89901</accession>